<protein>
    <recommendedName>
        <fullName evidence="1">Putative hydro-lyase SACE_1553</fullName>
        <ecNumber evidence="1">4.2.1.-</ecNumber>
    </recommendedName>
</protein>
<dbReference type="EC" id="4.2.1.-" evidence="1"/>
<dbReference type="EMBL" id="AM420293">
    <property type="protein sequence ID" value="CAM00875.1"/>
    <property type="molecule type" value="Genomic_DNA"/>
</dbReference>
<dbReference type="SMR" id="A4FA00"/>
<dbReference type="STRING" id="405948.SACE_1553"/>
<dbReference type="KEGG" id="sen:SACE_1553"/>
<dbReference type="eggNOG" id="COG4336">
    <property type="taxonomic scope" value="Bacteria"/>
</dbReference>
<dbReference type="HOGENOM" id="CLU_059759_0_0_11"/>
<dbReference type="OrthoDB" id="149585at2"/>
<dbReference type="Proteomes" id="UP000006728">
    <property type="component" value="Chromosome"/>
</dbReference>
<dbReference type="GO" id="GO:0016829">
    <property type="term" value="F:lyase activity"/>
    <property type="evidence" value="ECO:0007669"/>
    <property type="project" value="UniProtKB-KW"/>
</dbReference>
<dbReference type="FunFam" id="3.30.2040.10:FF:000001">
    <property type="entry name" value="D-glutamate cyclase, mitochondrial"/>
    <property type="match status" value="1"/>
</dbReference>
<dbReference type="Gene3D" id="3.40.1640.10">
    <property type="entry name" value="PSTPO5379-like"/>
    <property type="match status" value="1"/>
</dbReference>
<dbReference type="Gene3D" id="3.30.2040.10">
    <property type="entry name" value="PSTPO5379-like domain"/>
    <property type="match status" value="1"/>
</dbReference>
<dbReference type="HAMAP" id="MF_01830">
    <property type="entry name" value="Hydro_lyase"/>
    <property type="match status" value="1"/>
</dbReference>
<dbReference type="InterPro" id="IPR009906">
    <property type="entry name" value="D-Glu_cyclase"/>
</dbReference>
<dbReference type="InterPro" id="IPR038021">
    <property type="entry name" value="Putative_hydro-lyase"/>
</dbReference>
<dbReference type="InterPro" id="IPR016938">
    <property type="entry name" value="UPF0317"/>
</dbReference>
<dbReference type="NCBIfam" id="NF003969">
    <property type="entry name" value="PRK05463.1"/>
    <property type="match status" value="1"/>
</dbReference>
<dbReference type="PANTHER" id="PTHR32022">
    <property type="entry name" value="D-GLUTAMATE CYCLASE, MITOCHONDRIAL"/>
    <property type="match status" value="1"/>
</dbReference>
<dbReference type="PANTHER" id="PTHR32022:SF10">
    <property type="entry name" value="D-GLUTAMATE CYCLASE, MITOCHONDRIAL"/>
    <property type="match status" value="1"/>
</dbReference>
<dbReference type="Pfam" id="PF07286">
    <property type="entry name" value="D-Glu_cyclase"/>
    <property type="match status" value="1"/>
</dbReference>
<dbReference type="PIRSF" id="PIRSF029755">
    <property type="entry name" value="UCP029755"/>
    <property type="match status" value="1"/>
</dbReference>
<dbReference type="SUPFAM" id="SSF160920">
    <property type="entry name" value="PSTPO5379-like"/>
    <property type="match status" value="1"/>
</dbReference>
<feature type="chain" id="PRO_0000379863" description="Putative hydro-lyase SACE_1553">
    <location>
        <begin position="1"/>
        <end position="254"/>
    </location>
</feature>
<keyword id="KW-0456">Lyase</keyword>
<keyword id="KW-1185">Reference proteome</keyword>
<reference key="1">
    <citation type="journal article" date="2007" name="Nat. Biotechnol.">
        <title>Complete genome sequence of the erythromycin-producing bacterium Saccharopolyspora erythraea NRRL23338.</title>
        <authorList>
            <person name="Oliynyk M."/>
            <person name="Samborskyy M."/>
            <person name="Lester J.B."/>
            <person name="Mironenko T."/>
            <person name="Scott N."/>
            <person name="Dickens S."/>
            <person name="Haydock S.F."/>
            <person name="Leadlay P.F."/>
        </authorList>
    </citation>
    <scope>NUCLEOTIDE SEQUENCE [LARGE SCALE GENOMIC DNA]</scope>
    <source>
        <strain>ATCC 11635 / DSM 40517 / JCM 4748 / NBRC 13426 / NCIMB 8594 / NRRL 2338</strain>
    </source>
</reference>
<accession>A4FA00</accession>
<sequence length="254" mass="27207">MSPAAARAAFRAGLRVPTSGYSAGWTQANLIALPRDYAYDFLLFAQRNPKSCPVLDVTEPGETSASIFAGDLRTDLPAYRVYRDGELVEEVGDVTGLWRDDLVSFLVGCSFTFEAALLEAGVPVRHIETGGNVPMYRTNRDCRPAGRMSGPLVVSMRPVPASMVATAVRITSRYPAVHGAPVHIGEPADLGIGDIDSPDFGEPVEIRPGEIPVFWACGVTPQAAVMQSRPPFAIGHAPGHMAITDARDSEFLVP</sequence>
<gene>
    <name type="ordered locus">SACE_1553</name>
</gene>
<comment type="similarity">
    <text evidence="1">Belongs to the D-glutamate cyclase family.</text>
</comment>
<organism>
    <name type="scientific">Saccharopolyspora erythraea (strain ATCC 11635 / DSM 40517 / JCM 4748 / NBRC 13426 / NCIMB 8594 / NRRL 2338)</name>
    <dbReference type="NCBI Taxonomy" id="405948"/>
    <lineage>
        <taxon>Bacteria</taxon>
        <taxon>Bacillati</taxon>
        <taxon>Actinomycetota</taxon>
        <taxon>Actinomycetes</taxon>
        <taxon>Pseudonocardiales</taxon>
        <taxon>Pseudonocardiaceae</taxon>
        <taxon>Saccharopolyspora</taxon>
    </lineage>
</organism>
<proteinExistence type="inferred from homology"/>
<evidence type="ECO:0000255" key="1">
    <source>
        <dbReference type="HAMAP-Rule" id="MF_01830"/>
    </source>
</evidence>
<name>Y1553_SACEN</name>